<protein>
    <recommendedName>
        <fullName>H-2 class II histocompatibility antigen, A-D alpha chain</fullName>
    </recommendedName>
</protein>
<dbReference type="EMBL" id="K01923">
    <property type="protein sequence ID" value="AAA39615.1"/>
    <property type="molecule type" value="mRNA"/>
</dbReference>
<dbReference type="PIR" id="A02219">
    <property type="entry name" value="HLMSA2"/>
</dbReference>
<dbReference type="PDB" id="1ES0">
    <property type="method" value="X-ray"/>
    <property type="resolution" value="2.60 A"/>
    <property type="chains" value="A=24-205"/>
</dbReference>
<dbReference type="PDB" id="1F3J">
    <property type="method" value="X-ray"/>
    <property type="resolution" value="3.10 A"/>
    <property type="chains" value="A/D=27-208"/>
</dbReference>
<dbReference type="PDB" id="1IAO">
    <property type="method" value="X-ray"/>
    <property type="resolution" value="2.60 A"/>
    <property type="chains" value="A=24-209"/>
</dbReference>
<dbReference type="PDB" id="2IAD">
    <property type="method" value="X-ray"/>
    <property type="resolution" value="2.40 A"/>
    <property type="chains" value="A=24-209"/>
</dbReference>
<dbReference type="PDB" id="3CUP">
    <property type="method" value="X-ray"/>
    <property type="resolution" value="3.09 A"/>
    <property type="chains" value="A=24-205"/>
</dbReference>
<dbReference type="PDB" id="3MBE">
    <property type="method" value="X-ray"/>
    <property type="resolution" value="2.89 A"/>
    <property type="chains" value="A/E=24-205"/>
</dbReference>
<dbReference type="PDB" id="5DMK">
    <property type="method" value="X-ray"/>
    <property type="resolution" value="2.45 A"/>
    <property type="chains" value="A/C/E/G=26-198"/>
</dbReference>
<dbReference type="PDB" id="6BLQ">
    <property type="method" value="X-ray"/>
    <property type="resolution" value="1.80 A"/>
    <property type="chains" value="A=24-208"/>
</dbReference>
<dbReference type="PDB" id="6BLR">
    <property type="method" value="X-ray"/>
    <property type="resolution" value="1.96 A"/>
    <property type="chains" value="A=26-208"/>
</dbReference>
<dbReference type="PDB" id="6BLX">
    <property type="method" value="X-ray"/>
    <property type="resolution" value="2.32 A"/>
    <property type="chains" value="A=26-208"/>
</dbReference>
<dbReference type="PDB" id="6DFS">
    <property type="method" value="X-ray"/>
    <property type="resolution" value="3.10 A"/>
    <property type="chains" value="C=26-208"/>
</dbReference>
<dbReference type="PDB" id="6DFW">
    <property type="method" value="X-ray"/>
    <property type="resolution" value="3.20 A"/>
    <property type="chains" value="A/C=26-208"/>
</dbReference>
<dbReference type="PDB" id="7QHP">
    <property type="method" value="X-ray"/>
    <property type="resolution" value="1.82 A"/>
    <property type="chains" value="A=24-218"/>
</dbReference>
<dbReference type="PDB" id="7RDV">
    <property type="method" value="X-ray"/>
    <property type="resolution" value="2.90 A"/>
    <property type="chains" value="A=28-205"/>
</dbReference>
<dbReference type="PDB" id="7Z50">
    <property type="method" value="X-ray"/>
    <property type="resolution" value="2.65 A"/>
    <property type="chains" value="A/C=24-218"/>
</dbReference>
<dbReference type="PDBsum" id="1ES0"/>
<dbReference type="PDBsum" id="1F3J"/>
<dbReference type="PDBsum" id="1IAO"/>
<dbReference type="PDBsum" id="2IAD"/>
<dbReference type="PDBsum" id="3CUP"/>
<dbReference type="PDBsum" id="3MBE"/>
<dbReference type="PDBsum" id="5DMK"/>
<dbReference type="PDBsum" id="6BLQ"/>
<dbReference type="PDBsum" id="6BLR"/>
<dbReference type="PDBsum" id="6BLX"/>
<dbReference type="PDBsum" id="6DFS"/>
<dbReference type="PDBsum" id="6DFW"/>
<dbReference type="PDBsum" id="7QHP"/>
<dbReference type="PDBsum" id="7RDV"/>
<dbReference type="PDBsum" id="7Z50"/>
<dbReference type="SMR" id="P04228"/>
<dbReference type="IntAct" id="P04228">
    <property type="interactions" value="2"/>
</dbReference>
<dbReference type="MINT" id="P04228"/>
<dbReference type="GlyCosmos" id="P04228">
    <property type="glycosylation" value="1 site, No reported glycans"/>
</dbReference>
<dbReference type="jPOST" id="P04228"/>
<dbReference type="ProteomicsDB" id="270880"/>
<dbReference type="ABCD" id="P04228">
    <property type="antibodies" value="2 sequenced antibodies"/>
</dbReference>
<dbReference type="AGR" id="MGI:95895"/>
<dbReference type="MGI" id="MGI:95895">
    <property type="gene designation" value="H2-Aa"/>
</dbReference>
<dbReference type="OrthoDB" id="8925804at2759"/>
<dbReference type="ChiTaRS" id="H2-Aa">
    <property type="organism name" value="mouse"/>
</dbReference>
<dbReference type="EvolutionaryTrace" id="P04228"/>
<dbReference type="Proteomes" id="UP000000589">
    <property type="component" value="Unplaced"/>
</dbReference>
<dbReference type="GO" id="GO:0009897">
    <property type="term" value="C:external side of plasma membrane"/>
    <property type="evidence" value="ECO:0000314"/>
    <property type="project" value="MGI"/>
</dbReference>
<dbReference type="GO" id="GO:0005764">
    <property type="term" value="C:lysosome"/>
    <property type="evidence" value="ECO:0000314"/>
    <property type="project" value="MGI"/>
</dbReference>
<dbReference type="GO" id="GO:0042613">
    <property type="term" value="C:MHC class II protein complex"/>
    <property type="evidence" value="ECO:0000314"/>
    <property type="project" value="MGI"/>
</dbReference>
<dbReference type="GO" id="GO:0005886">
    <property type="term" value="C:plasma membrane"/>
    <property type="evidence" value="ECO:0000314"/>
    <property type="project" value="MGI"/>
</dbReference>
<dbReference type="GO" id="GO:0042605">
    <property type="term" value="F:peptide antigen binding"/>
    <property type="evidence" value="ECO:0000314"/>
    <property type="project" value="MGI"/>
</dbReference>
<dbReference type="GO" id="GO:0002250">
    <property type="term" value="P:adaptive immune response"/>
    <property type="evidence" value="ECO:0007669"/>
    <property type="project" value="UniProtKB-KW"/>
</dbReference>
<dbReference type="GO" id="GO:0019882">
    <property type="term" value="P:antigen processing and presentation"/>
    <property type="evidence" value="ECO:0000314"/>
    <property type="project" value="MGI"/>
</dbReference>
<dbReference type="GO" id="GO:0019886">
    <property type="term" value="P:antigen processing and presentation of exogenous peptide antigen via MHC class II"/>
    <property type="evidence" value="ECO:0000314"/>
    <property type="project" value="MGI"/>
</dbReference>
<dbReference type="GO" id="GO:0048002">
    <property type="term" value="P:antigen processing and presentation of peptide antigen"/>
    <property type="evidence" value="ECO:0000314"/>
    <property type="project" value="MGI"/>
</dbReference>
<dbReference type="GO" id="GO:0045582">
    <property type="term" value="P:positive regulation of T cell differentiation"/>
    <property type="evidence" value="ECO:0000314"/>
    <property type="project" value="MGI"/>
</dbReference>
<dbReference type="CDD" id="cd21006">
    <property type="entry name" value="IgC1_MHC_II_alpha_I-A"/>
    <property type="match status" value="1"/>
</dbReference>
<dbReference type="FunFam" id="2.60.40.10:FF:000280">
    <property type="entry name" value="HLA class II histocompatibility antigen, DR alpha chain"/>
    <property type="match status" value="1"/>
</dbReference>
<dbReference type="FunFam" id="3.10.320.10:FF:000002">
    <property type="entry name" value="HLA class II histocompatibility antigen, DR alpha chain"/>
    <property type="match status" value="1"/>
</dbReference>
<dbReference type="Gene3D" id="3.10.320.10">
    <property type="entry name" value="Class II Histocompatibility Antigen, M Beta Chain, Chain B, domain 1"/>
    <property type="match status" value="1"/>
</dbReference>
<dbReference type="Gene3D" id="2.60.40.10">
    <property type="entry name" value="Immunoglobulins"/>
    <property type="match status" value="1"/>
</dbReference>
<dbReference type="InterPro" id="IPR007110">
    <property type="entry name" value="Ig-like_dom"/>
</dbReference>
<dbReference type="InterPro" id="IPR036179">
    <property type="entry name" value="Ig-like_dom_sf"/>
</dbReference>
<dbReference type="InterPro" id="IPR013783">
    <property type="entry name" value="Ig-like_fold"/>
</dbReference>
<dbReference type="InterPro" id="IPR003006">
    <property type="entry name" value="Ig/MHC_CS"/>
</dbReference>
<dbReference type="InterPro" id="IPR003597">
    <property type="entry name" value="Ig_C1-set"/>
</dbReference>
<dbReference type="InterPro" id="IPR050160">
    <property type="entry name" value="MHC/Immunoglobulin"/>
</dbReference>
<dbReference type="InterPro" id="IPR011162">
    <property type="entry name" value="MHC_I/II-like_Ag-recog"/>
</dbReference>
<dbReference type="InterPro" id="IPR014745">
    <property type="entry name" value="MHC_II_a/b_N"/>
</dbReference>
<dbReference type="InterPro" id="IPR001003">
    <property type="entry name" value="MHC_II_a_N"/>
</dbReference>
<dbReference type="PANTHER" id="PTHR19944:SF59">
    <property type="entry name" value="HLA CLASS II HISTOCOMPATIBILITY ANTIGEN, DQ ALPHA 1 CHAIN"/>
    <property type="match status" value="1"/>
</dbReference>
<dbReference type="PANTHER" id="PTHR19944">
    <property type="entry name" value="MHC CLASS II-RELATED"/>
    <property type="match status" value="1"/>
</dbReference>
<dbReference type="Pfam" id="PF07654">
    <property type="entry name" value="C1-set"/>
    <property type="match status" value="1"/>
</dbReference>
<dbReference type="Pfam" id="PF00993">
    <property type="entry name" value="MHC_II_alpha"/>
    <property type="match status" value="1"/>
</dbReference>
<dbReference type="SMART" id="SM00407">
    <property type="entry name" value="IGc1"/>
    <property type="match status" value="1"/>
</dbReference>
<dbReference type="SMART" id="SM00920">
    <property type="entry name" value="MHC_II_alpha"/>
    <property type="match status" value="1"/>
</dbReference>
<dbReference type="SUPFAM" id="SSF48726">
    <property type="entry name" value="Immunoglobulin"/>
    <property type="match status" value="1"/>
</dbReference>
<dbReference type="SUPFAM" id="SSF54452">
    <property type="entry name" value="MHC antigen-recognition domain"/>
    <property type="match status" value="1"/>
</dbReference>
<dbReference type="PROSITE" id="PS50835">
    <property type="entry name" value="IG_LIKE"/>
    <property type="match status" value="1"/>
</dbReference>
<dbReference type="PROSITE" id="PS00290">
    <property type="entry name" value="IG_MHC"/>
    <property type="match status" value="1"/>
</dbReference>
<comment type="subcellular location">
    <subcellularLocation>
        <location evidence="3">Membrane</location>
        <topology evidence="3">Single-pass type I membrane protein</topology>
    </subcellularLocation>
</comment>
<comment type="similarity">
    <text evidence="3">Belongs to the MHC class II family.</text>
</comment>
<gene>
    <name type="primary">H2-Aa</name>
</gene>
<keyword id="KW-0002">3D-structure</keyword>
<keyword id="KW-1064">Adaptive immunity</keyword>
<keyword id="KW-1015">Disulfide bond</keyword>
<keyword id="KW-0325">Glycoprotein</keyword>
<keyword id="KW-0391">Immunity</keyword>
<keyword id="KW-0472">Membrane</keyword>
<keyword id="KW-0491">MHC II</keyword>
<keyword id="KW-1185">Reference proteome</keyword>
<keyword id="KW-0732">Signal</keyword>
<keyword id="KW-0812">Transmembrane</keyword>
<keyword id="KW-1133">Transmembrane helix</keyword>
<proteinExistence type="evidence at protein level"/>
<evidence type="ECO:0000255" key="1"/>
<evidence type="ECO:0000255" key="2">
    <source>
        <dbReference type="PROSITE-ProRule" id="PRU00114"/>
    </source>
</evidence>
<evidence type="ECO:0000305" key="3"/>
<evidence type="ECO:0007829" key="4">
    <source>
        <dbReference type="PDB" id="1IAO"/>
    </source>
</evidence>
<evidence type="ECO:0007829" key="5">
    <source>
        <dbReference type="PDB" id="3MBE"/>
    </source>
</evidence>
<evidence type="ECO:0007829" key="6">
    <source>
        <dbReference type="PDB" id="6BLQ"/>
    </source>
</evidence>
<evidence type="ECO:0007829" key="7">
    <source>
        <dbReference type="PDB" id="6DFW"/>
    </source>
</evidence>
<feature type="signal peptide">
    <location>
        <begin position="1"/>
        <end position="23"/>
    </location>
</feature>
<feature type="chain" id="PRO_0000018976" description="H-2 class II histocompatibility antigen, A-D alpha chain">
    <location>
        <begin position="24"/>
        <end position="256"/>
    </location>
</feature>
<feature type="topological domain" description="Extracellular" evidence="1">
    <location>
        <begin position="24"/>
        <end position="218"/>
    </location>
</feature>
<feature type="transmembrane region" description="Helical" evidence="1">
    <location>
        <begin position="219"/>
        <end position="244"/>
    </location>
</feature>
<feature type="topological domain" description="Cytoplasmic" evidence="1">
    <location>
        <begin position="245"/>
        <end position="256"/>
    </location>
</feature>
<feature type="domain" description="Ig-like C1-type">
    <location>
        <begin position="114"/>
        <end position="206"/>
    </location>
</feature>
<feature type="region of interest" description="Alpha-1">
    <location>
        <begin position="24"/>
        <end position="111"/>
    </location>
</feature>
<feature type="region of interest" description="Alpha-2">
    <location>
        <begin position="112"/>
        <end position="205"/>
    </location>
</feature>
<feature type="region of interest" description="Connecting peptide">
    <location>
        <begin position="206"/>
        <end position="218"/>
    </location>
</feature>
<feature type="glycosylation site" description="N-linked (GlcNAc...) asparagine" evidence="1">
    <location>
        <position position="145"/>
    </location>
</feature>
<feature type="disulfide bond" evidence="2">
    <location>
        <begin position="134"/>
        <end position="190"/>
    </location>
</feature>
<feature type="strand" evidence="6">
    <location>
        <begin position="30"/>
        <end position="42"/>
    </location>
</feature>
<feature type="turn" evidence="6">
    <location>
        <begin position="43"/>
        <end position="45"/>
    </location>
</feature>
<feature type="strand" evidence="6">
    <location>
        <begin position="46"/>
        <end position="53"/>
    </location>
</feature>
<feature type="strand" evidence="6">
    <location>
        <begin position="56"/>
        <end position="62"/>
    </location>
</feature>
<feature type="turn" evidence="6">
    <location>
        <begin position="63"/>
        <end position="66"/>
    </location>
</feature>
<feature type="strand" evidence="6">
    <location>
        <begin position="67"/>
        <end position="72"/>
    </location>
</feature>
<feature type="helix" evidence="6">
    <location>
        <begin position="73"/>
        <end position="76"/>
    </location>
</feature>
<feature type="strand" evidence="6">
    <location>
        <begin position="77"/>
        <end position="80"/>
    </location>
</feature>
<feature type="helix" evidence="6">
    <location>
        <begin position="84"/>
        <end position="103"/>
    </location>
</feature>
<feature type="turn" evidence="5">
    <location>
        <begin position="104"/>
        <end position="106"/>
    </location>
</feature>
<feature type="strand" evidence="6">
    <location>
        <begin position="115"/>
        <end position="122"/>
    </location>
</feature>
<feature type="strand" evidence="6">
    <location>
        <begin position="130"/>
        <end position="139"/>
    </location>
</feature>
<feature type="strand" evidence="6">
    <location>
        <begin position="145"/>
        <end position="150"/>
    </location>
</feature>
<feature type="strand" evidence="6">
    <location>
        <begin position="153"/>
        <end position="155"/>
    </location>
</feature>
<feature type="strand" evidence="6">
    <location>
        <begin position="159"/>
        <end position="161"/>
    </location>
</feature>
<feature type="strand" evidence="7">
    <location>
        <begin position="168"/>
        <end position="170"/>
    </location>
</feature>
<feature type="strand" evidence="6">
    <location>
        <begin position="172"/>
        <end position="180"/>
    </location>
</feature>
<feature type="strand" evidence="4">
    <location>
        <begin position="182"/>
        <end position="185"/>
    </location>
</feature>
<feature type="strand" evidence="6">
    <location>
        <begin position="188"/>
        <end position="193"/>
    </location>
</feature>
<feature type="strand" evidence="6">
    <location>
        <begin position="201"/>
        <end position="205"/>
    </location>
</feature>
<reference key="1">
    <citation type="journal article" date="1983" name="Cell">
        <title>Regions of allelic hypervariability in the murine A alpha immune response gene.</title>
        <authorList>
            <person name="Benoist C.O."/>
            <person name="Mathis D.J."/>
            <person name="Kanter M.R."/>
            <person name="Williams V.E."/>
            <person name="McDevitt H.O."/>
        </authorList>
    </citation>
    <scope>NUCLEOTIDE SEQUENCE [MRNA]</scope>
</reference>
<reference key="2">
    <citation type="journal article" date="2010" name="Cell">
        <title>A tissue-specific atlas of mouse protein phosphorylation and expression.</title>
        <authorList>
            <person name="Huttlin E.L."/>
            <person name="Jedrychowski M.P."/>
            <person name="Elias J.E."/>
            <person name="Goswami T."/>
            <person name="Rad R."/>
            <person name="Beausoleil S.A."/>
            <person name="Villen J."/>
            <person name="Haas W."/>
            <person name="Sowa M.E."/>
            <person name="Gygi S.P."/>
        </authorList>
    </citation>
    <scope>IDENTIFICATION BY MASS SPECTROMETRY [LARGE SCALE ANALYSIS]</scope>
    <source>
        <tissue>Heart</tissue>
        <tissue>Kidney</tissue>
        <tissue>Lung</tissue>
        <tissue>Pancreas</tissue>
        <tissue>Spleen</tissue>
    </source>
</reference>
<accession>P04228</accession>
<organism>
    <name type="scientific">Mus musculus</name>
    <name type="common">Mouse</name>
    <dbReference type="NCBI Taxonomy" id="10090"/>
    <lineage>
        <taxon>Eukaryota</taxon>
        <taxon>Metazoa</taxon>
        <taxon>Chordata</taxon>
        <taxon>Craniata</taxon>
        <taxon>Vertebrata</taxon>
        <taxon>Euteleostomi</taxon>
        <taxon>Mammalia</taxon>
        <taxon>Eutheria</taxon>
        <taxon>Euarchontoglires</taxon>
        <taxon>Glires</taxon>
        <taxon>Rodentia</taxon>
        <taxon>Myomorpha</taxon>
        <taxon>Muroidea</taxon>
        <taxon>Muridae</taxon>
        <taxon>Murinae</taxon>
        <taxon>Mus</taxon>
        <taxon>Mus</taxon>
    </lineage>
</organism>
<sequence>MPCSRALILGVLALNTMLSLCGGEDDIEADHVGFYGTTVYQSPGDIGQYTHEFDGDELFYVDLDKKKTVWRLPEFGQLILFEPQGGLQNIAAEKHNLGILTKRSNFTPATNEAPQATVFPKSPVLLGQPNTLICFVDNIFPPVINITWLRNSKSVTDGVYETSFLVNRDHSFHKLSYLTFIPSDDDIYDCKVEHWGLEEPVLKHWEPEIPAPMSELTETVVCALGLSVGLVGIVVGTIFIIQGLRSGGTSRHPGPL</sequence>
<name>HA2D_MOUSE</name>